<proteinExistence type="inferred from homology"/>
<sequence length="71" mass="8562">MKKTFYHYMMKHRAALFRNEISDLAEAMYDDLSFPKQSEDYDEISSYLELSGMLESMSIFDEAWDLYIQDR</sequence>
<protein>
    <recommendedName>
        <fullName evidence="1">UPF0346 protein BCB4264_A2283</fullName>
    </recommendedName>
</protein>
<evidence type="ECO:0000255" key="1">
    <source>
        <dbReference type="HAMAP-Rule" id="MF_01538"/>
    </source>
</evidence>
<feature type="chain" id="PRO_1000146609" description="UPF0346 protein BCB4264_A2283">
    <location>
        <begin position="1"/>
        <end position="71"/>
    </location>
</feature>
<dbReference type="EMBL" id="CP001176">
    <property type="protein sequence ID" value="ACK63724.1"/>
    <property type="molecule type" value="Genomic_DNA"/>
</dbReference>
<dbReference type="RefSeq" id="WP_000750717.1">
    <property type="nucleotide sequence ID" value="NZ_VEHB01000001.1"/>
</dbReference>
<dbReference type="SMR" id="B7H560"/>
<dbReference type="KEGG" id="bcb:BCB4264_A2283"/>
<dbReference type="HOGENOM" id="CLU_177534_0_0_9"/>
<dbReference type="Proteomes" id="UP000007096">
    <property type="component" value="Chromosome"/>
</dbReference>
<dbReference type="Gene3D" id="1.10.150.260">
    <property type="entry name" value="YozE SAM-like"/>
    <property type="match status" value="1"/>
</dbReference>
<dbReference type="HAMAP" id="MF_01538">
    <property type="entry name" value="UPF0346"/>
    <property type="match status" value="1"/>
</dbReference>
<dbReference type="InterPro" id="IPR010673">
    <property type="entry name" value="UPF0346"/>
</dbReference>
<dbReference type="InterPro" id="IPR023089">
    <property type="entry name" value="YozE_SAM-like"/>
</dbReference>
<dbReference type="InterPro" id="IPR036806">
    <property type="entry name" value="YozE_SAM-like_sf"/>
</dbReference>
<dbReference type="NCBIfam" id="NF010193">
    <property type="entry name" value="PRK13672.1"/>
    <property type="match status" value="1"/>
</dbReference>
<dbReference type="Pfam" id="PF06855">
    <property type="entry name" value="YozE_SAM_like"/>
    <property type="match status" value="1"/>
</dbReference>
<dbReference type="PIRSF" id="PIRSF037262">
    <property type="entry name" value="UCP037262"/>
    <property type="match status" value="1"/>
</dbReference>
<dbReference type="SUPFAM" id="SSF140652">
    <property type="entry name" value="YozE-like"/>
    <property type="match status" value="1"/>
</dbReference>
<name>Y2283_BACC4</name>
<organism>
    <name type="scientific">Bacillus cereus (strain B4264)</name>
    <dbReference type="NCBI Taxonomy" id="405532"/>
    <lineage>
        <taxon>Bacteria</taxon>
        <taxon>Bacillati</taxon>
        <taxon>Bacillota</taxon>
        <taxon>Bacilli</taxon>
        <taxon>Bacillales</taxon>
        <taxon>Bacillaceae</taxon>
        <taxon>Bacillus</taxon>
        <taxon>Bacillus cereus group</taxon>
    </lineage>
</organism>
<reference key="1">
    <citation type="submission" date="2008-10" db="EMBL/GenBank/DDBJ databases">
        <title>Genome sequence of Bacillus cereus B4264.</title>
        <authorList>
            <person name="Dodson R.J."/>
            <person name="Durkin A.S."/>
            <person name="Rosovitz M.J."/>
            <person name="Rasko D.A."/>
            <person name="Hoffmaster A."/>
            <person name="Ravel J."/>
            <person name="Sutton G."/>
        </authorList>
    </citation>
    <scope>NUCLEOTIDE SEQUENCE [LARGE SCALE GENOMIC DNA]</scope>
    <source>
        <strain>B4264</strain>
    </source>
</reference>
<accession>B7H560</accession>
<comment type="similarity">
    <text evidence="1">Belongs to the UPF0346 family.</text>
</comment>
<gene>
    <name type="ordered locus">BCB4264_A2283</name>
</gene>